<protein>
    <recommendedName>
        <fullName evidence="1">ATP synthase subunit alpha</fullName>
        <ecNumber evidence="1">7.1.2.2</ecNumber>
    </recommendedName>
    <alternativeName>
        <fullName evidence="1">ATP synthase F1 sector subunit alpha</fullName>
    </alternativeName>
    <alternativeName>
        <fullName evidence="1">F-ATPase subunit alpha</fullName>
    </alternativeName>
</protein>
<dbReference type="EC" id="7.1.2.2" evidence="1"/>
<dbReference type="EMBL" id="CP000813">
    <property type="protein sequence ID" value="ABV63981.1"/>
    <property type="molecule type" value="Genomic_DNA"/>
</dbReference>
<dbReference type="RefSeq" id="WP_012011548.1">
    <property type="nucleotide sequence ID" value="NZ_VEIS01000002.1"/>
</dbReference>
<dbReference type="SMR" id="A8FIB4"/>
<dbReference type="STRING" id="315750.BPUM_3328"/>
<dbReference type="GeneID" id="5622618"/>
<dbReference type="KEGG" id="bpu:BPUM_3328"/>
<dbReference type="eggNOG" id="COG0056">
    <property type="taxonomic scope" value="Bacteria"/>
</dbReference>
<dbReference type="HOGENOM" id="CLU_010091_2_1_9"/>
<dbReference type="OrthoDB" id="9803053at2"/>
<dbReference type="Proteomes" id="UP000001355">
    <property type="component" value="Chromosome"/>
</dbReference>
<dbReference type="GO" id="GO:0005886">
    <property type="term" value="C:plasma membrane"/>
    <property type="evidence" value="ECO:0007669"/>
    <property type="project" value="UniProtKB-SubCell"/>
</dbReference>
<dbReference type="GO" id="GO:0045259">
    <property type="term" value="C:proton-transporting ATP synthase complex"/>
    <property type="evidence" value="ECO:0007669"/>
    <property type="project" value="UniProtKB-KW"/>
</dbReference>
<dbReference type="GO" id="GO:0043531">
    <property type="term" value="F:ADP binding"/>
    <property type="evidence" value="ECO:0007669"/>
    <property type="project" value="TreeGrafter"/>
</dbReference>
<dbReference type="GO" id="GO:0005524">
    <property type="term" value="F:ATP binding"/>
    <property type="evidence" value="ECO:0007669"/>
    <property type="project" value="UniProtKB-UniRule"/>
</dbReference>
<dbReference type="GO" id="GO:0046933">
    <property type="term" value="F:proton-transporting ATP synthase activity, rotational mechanism"/>
    <property type="evidence" value="ECO:0007669"/>
    <property type="project" value="UniProtKB-UniRule"/>
</dbReference>
<dbReference type="CDD" id="cd18113">
    <property type="entry name" value="ATP-synt_F1_alpha_C"/>
    <property type="match status" value="1"/>
</dbReference>
<dbReference type="CDD" id="cd18116">
    <property type="entry name" value="ATP-synt_F1_alpha_N"/>
    <property type="match status" value="1"/>
</dbReference>
<dbReference type="CDD" id="cd01132">
    <property type="entry name" value="F1-ATPase_alpha_CD"/>
    <property type="match status" value="1"/>
</dbReference>
<dbReference type="FunFam" id="1.20.150.20:FF:000001">
    <property type="entry name" value="ATP synthase subunit alpha"/>
    <property type="match status" value="1"/>
</dbReference>
<dbReference type="FunFam" id="2.40.30.20:FF:000001">
    <property type="entry name" value="ATP synthase subunit alpha"/>
    <property type="match status" value="1"/>
</dbReference>
<dbReference type="FunFam" id="3.40.50.300:FF:000002">
    <property type="entry name" value="ATP synthase subunit alpha"/>
    <property type="match status" value="1"/>
</dbReference>
<dbReference type="Gene3D" id="2.40.30.20">
    <property type="match status" value="1"/>
</dbReference>
<dbReference type="Gene3D" id="1.20.150.20">
    <property type="entry name" value="ATP synthase alpha/beta chain, C-terminal domain"/>
    <property type="match status" value="1"/>
</dbReference>
<dbReference type="Gene3D" id="3.40.50.300">
    <property type="entry name" value="P-loop containing nucleotide triphosphate hydrolases"/>
    <property type="match status" value="1"/>
</dbReference>
<dbReference type="HAMAP" id="MF_01346">
    <property type="entry name" value="ATP_synth_alpha_bact"/>
    <property type="match status" value="1"/>
</dbReference>
<dbReference type="InterPro" id="IPR023366">
    <property type="entry name" value="ATP_synth_asu-like_sf"/>
</dbReference>
<dbReference type="InterPro" id="IPR000793">
    <property type="entry name" value="ATP_synth_asu_C"/>
</dbReference>
<dbReference type="InterPro" id="IPR038376">
    <property type="entry name" value="ATP_synth_asu_C_sf"/>
</dbReference>
<dbReference type="InterPro" id="IPR033732">
    <property type="entry name" value="ATP_synth_F1_a_nt-bd_dom"/>
</dbReference>
<dbReference type="InterPro" id="IPR005294">
    <property type="entry name" value="ATP_synth_F1_asu"/>
</dbReference>
<dbReference type="InterPro" id="IPR020003">
    <property type="entry name" value="ATPase_a/bsu_AS"/>
</dbReference>
<dbReference type="InterPro" id="IPR004100">
    <property type="entry name" value="ATPase_F1/V1/A1_a/bsu_N"/>
</dbReference>
<dbReference type="InterPro" id="IPR036121">
    <property type="entry name" value="ATPase_F1/V1/A1_a/bsu_N_sf"/>
</dbReference>
<dbReference type="InterPro" id="IPR000194">
    <property type="entry name" value="ATPase_F1/V1/A1_a/bsu_nucl-bd"/>
</dbReference>
<dbReference type="InterPro" id="IPR027417">
    <property type="entry name" value="P-loop_NTPase"/>
</dbReference>
<dbReference type="NCBIfam" id="TIGR00962">
    <property type="entry name" value="atpA"/>
    <property type="match status" value="1"/>
</dbReference>
<dbReference type="NCBIfam" id="NF009884">
    <property type="entry name" value="PRK13343.1"/>
    <property type="match status" value="1"/>
</dbReference>
<dbReference type="PANTHER" id="PTHR48082">
    <property type="entry name" value="ATP SYNTHASE SUBUNIT ALPHA, MITOCHONDRIAL"/>
    <property type="match status" value="1"/>
</dbReference>
<dbReference type="PANTHER" id="PTHR48082:SF2">
    <property type="entry name" value="ATP SYNTHASE SUBUNIT ALPHA, MITOCHONDRIAL"/>
    <property type="match status" value="1"/>
</dbReference>
<dbReference type="Pfam" id="PF00006">
    <property type="entry name" value="ATP-synt_ab"/>
    <property type="match status" value="1"/>
</dbReference>
<dbReference type="Pfam" id="PF00306">
    <property type="entry name" value="ATP-synt_ab_C"/>
    <property type="match status" value="1"/>
</dbReference>
<dbReference type="Pfam" id="PF02874">
    <property type="entry name" value="ATP-synt_ab_N"/>
    <property type="match status" value="1"/>
</dbReference>
<dbReference type="PIRSF" id="PIRSF039088">
    <property type="entry name" value="F_ATPase_subunit_alpha"/>
    <property type="match status" value="1"/>
</dbReference>
<dbReference type="SUPFAM" id="SSF47917">
    <property type="entry name" value="C-terminal domain of alpha and beta subunits of F1 ATP synthase"/>
    <property type="match status" value="1"/>
</dbReference>
<dbReference type="SUPFAM" id="SSF50615">
    <property type="entry name" value="N-terminal domain of alpha and beta subunits of F1 ATP synthase"/>
    <property type="match status" value="1"/>
</dbReference>
<dbReference type="SUPFAM" id="SSF52540">
    <property type="entry name" value="P-loop containing nucleoside triphosphate hydrolases"/>
    <property type="match status" value="1"/>
</dbReference>
<dbReference type="PROSITE" id="PS00152">
    <property type="entry name" value="ATPASE_ALPHA_BETA"/>
    <property type="match status" value="1"/>
</dbReference>
<feature type="chain" id="PRO_1000067710" description="ATP synthase subunit alpha">
    <location>
        <begin position="1"/>
        <end position="502"/>
    </location>
</feature>
<feature type="binding site" evidence="1">
    <location>
        <begin position="169"/>
        <end position="176"/>
    </location>
    <ligand>
        <name>ATP</name>
        <dbReference type="ChEBI" id="CHEBI:30616"/>
    </ligand>
</feature>
<feature type="site" description="Required for activity" evidence="1">
    <location>
        <position position="362"/>
    </location>
</feature>
<gene>
    <name evidence="1" type="primary">atpA</name>
    <name type="ordered locus">BPUM_3328</name>
</gene>
<organism>
    <name type="scientific">Bacillus pumilus (strain SAFR-032)</name>
    <dbReference type="NCBI Taxonomy" id="315750"/>
    <lineage>
        <taxon>Bacteria</taxon>
        <taxon>Bacillati</taxon>
        <taxon>Bacillota</taxon>
        <taxon>Bacilli</taxon>
        <taxon>Bacillales</taxon>
        <taxon>Bacillaceae</taxon>
        <taxon>Bacillus</taxon>
    </lineage>
</organism>
<keyword id="KW-0066">ATP synthesis</keyword>
<keyword id="KW-0067">ATP-binding</keyword>
<keyword id="KW-1003">Cell membrane</keyword>
<keyword id="KW-0139">CF(1)</keyword>
<keyword id="KW-0375">Hydrogen ion transport</keyword>
<keyword id="KW-0406">Ion transport</keyword>
<keyword id="KW-0472">Membrane</keyword>
<keyword id="KW-0547">Nucleotide-binding</keyword>
<keyword id="KW-1278">Translocase</keyword>
<keyword id="KW-0813">Transport</keyword>
<proteinExistence type="inferred from homology"/>
<reference key="1">
    <citation type="journal article" date="2007" name="PLoS ONE">
        <title>Paradoxical DNA repair and peroxide resistance gene conservation in Bacillus pumilus SAFR-032.</title>
        <authorList>
            <person name="Gioia J."/>
            <person name="Yerrapragada S."/>
            <person name="Qin X."/>
            <person name="Jiang H."/>
            <person name="Igboeli O.C."/>
            <person name="Muzny D."/>
            <person name="Dugan-Rocha S."/>
            <person name="Ding Y."/>
            <person name="Hawes A."/>
            <person name="Liu W."/>
            <person name="Perez L."/>
            <person name="Kovar C."/>
            <person name="Dinh H."/>
            <person name="Lee S."/>
            <person name="Nazareth L."/>
            <person name="Blyth P."/>
            <person name="Holder M."/>
            <person name="Buhay C."/>
            <person name="Tirumalai M.R."/>
            <person name="Liu Y."/>
            <person name="Dasgupta I."/>
            <person name="Bokhetache L."/>
            <person name="Fujita M."/>
            <person name="Karouia F."/>
            <person name="Eswara Moorthy P."/>
            <person name="Siefert J."/>
            <person name="Uzman A."/>
            <person name="Buzumbo P."/>
            <person name="Verma A."/>
            <person name="Zwiya H."/>
            <person name="McWilliams B.D."/>
            <person name="Olowu A."/>
            <person name="Clinkenbeard K.D."/>
            <person name="Newcombe D."/>
            <person name="Golebiewski L."/>
            <person name="Petrosino J.F."/>
            <person name="Nicholson W.L."/>
            <person name="Fox G.E."/>
            <person name="Venkateswaran K."/>
            <person name="Highlander S.K."/>
            <person name="Weinstock G.M."/>
        </authorList>
    </citation>
    <scope>NUCLEOTIDE SEQUENCE [LARGE SCALE GENOMIC DNA]</scope>
    <source>
        <strain>SAFR-032</strain>
    </source>
</reference>
<evidence type="ECO:0000255" key="1">
    <source>
        <dbReference type="HAMAP-Rule" id="MF_01346"/>
    </source>
</evidence>
<accession>A8FIB4</accession>
<comment type="function">
    <text evidence="1">Produces ATP from ADP in the presence of a proton gradient across the membrane. The alpha chain is a regulatory subunit.</text>
</comment>
<comment type="catalytic activity">
    <reaction evidence="1">
        <text>ATP + H2O + 4 H(+)(in) = ADP + phosphate + 5 H(+)(out)</text>
        <dbReference type="Rhea" id="RHEA:57720"/>
        <dbReference type="ChEBI" id="CHEBI:15377"/>
        <dbReference type="ChEBI" id="CHEBI:15378"/>
        <dbReference type="ChEBI" id="CHEBI:30616"/>
        <dbReference type="ChEBI" id="CHEBI:43474"/>
        <dbReference type="ChEBI" id="CHEBI:456216"/>
        <dbReference type="EC" id="7.1.2.2"/>
    </reaction>
</comment>
<comment type="subunit">
    <text evidence="1">F-type ATPases have 2 components, CF(1) - the catalytic core - and CF(0) - the membrane proton channel. CF(1) has five subunits: alpha(3), beta(3), gamma(1), delta(1), epsilon(1). CF(0) has three main subunits: a(1), b(2) and c(9-12). The alpha and beta chains form an alternating ring which encloses part of the gamma chain. CF(1) is attached to CF(0) by a central stalk formed by the gamma and epsilon chains, while a peripheral stalk is formed by the delta and b chains.</text>
</comment>
<comment type="subcellular location">
    <subcellularLocation>
        <location evidence="1">Cell membrane</location>
        <topology evidence="1">Peripheral membrane protein</topology>
    </subcellularLocation>
</comment>
<comment type="similarity">
    <text evidence="1">Belongs to the ATPase alpha/beta chains family.</text>
</comment>
<name>ATPA_BACP2</name>
<sequence>MSIKAEEISALIKQQIQNYQSEIEVKDVGTVIQVGDGIARVHGLDNIMAGELVEFSNGVMGMAQNLEESNVGIVILGPYKDIREGDDVKRTGRIMEVPVGEELIGRIVNPLGQPVDGLGPILTSKTRPIESEAPGVMDRKSVHEPLQTGIKAIDALIPIGRGQRELIIGDRQTGKTSVAIDTILNQKDQDMICIYVAIGQKESTVRGVVETLRKHGALDYTIVVTASASQPAPLLYLAPYAGVTMGEEFMYNGKHVLVVYDDLSKQAAAYRELSLLLRRPPGREAFPGDVFYLHSRLLERAAKLSDAKGGGSITALPFVETQAGDISAYIPTNVISITDGQIFLQSDLFFSGVRPAVNAGLSVSRVGGSAQIKAMKKVAGTLRLDLASYRELEAFAQFGSDLDQATQAKLNRGARTVEVLKQDLNKPLKVEKQVAILYALTRGYLDDVAVADVKRFEAELFMYIEENHKGLFDTISQTGNMPADEEWNTAIEGFKRTFAPSN</sequence>